<evidence type="ECO:0000250" key="1"/>
<evidence type="ECO:0000305" key="2"/>
<protein>
    <recommendedName>
        <fullName>Uncharacterized oxidoreductase YvaG</fullName>
        <ecNumber>1.-.-.-</ecNumber>
    </recommendedName>
</protein>
<feature type="chain" id="PRO_0000377003" description="Uncharacterized oxidoreductase YvaG">
    <location>
        <begin position="1"/>
        <end position="264"/>
    </location>
</feature>
<feature type="active site" description="Proton acceptor" evidence="1">
    <location>
        <position position="154"/>
    </location>
</feature>
<feature type="binding site" evidence="1">
    <location>
        <begin position="13"/>
        <end position="20"/>
    </location>
    <ligand>
        <name>NADP(+)</name>
        <dbReference type="ChEBI" id="CHEBI:58349"/>
    </ligand>
</feature>
<feature type="binding site" evidence="1">
    <location>
        <position position="141"/>
    </location>
    <ligand>
        <name>substrate</name>
    </ligand>
</feature>
<accession>O32229</accession>
<dbReference type="EC" id="1.-.-.-"/>
<dbReference type="EMBL" id="AL009126">
    <property type="protein sequence ID" value="CAB15364.1"/>
    <property type="molecule type" value="Genomic_DNA"/>
</dbReference>
<dbReference type="PIR" id="E70027">
    <property type="entry name" value="E70027"/>
</dbReference>
<dbReference type="RefSeq" id="NP_391239.1">
    <property type="nucleotide sequence ID" value="NC_000964.3"/>
</dbReference>
<dbReference type="RefSeq" id="WP_003228388.1">
    <property type="nucleotide sequence ID" value="NZ_OZ025638.1"/>
</dbReference>
<dbReference type="SMR" id="O32229"/>
<dbReference type="FunCoup" id="O32229">
    <property type="interactions" value="33"/>
</dbReference>
<dbReference type="STRING" id="224308.BSU33590"/>
<dbReference type="PaxDb" id="224308-BSU33590"/>
<dbReference type="EnsemblBacteria" id="CAB15364">
    <property type="protein sequence ID" value="CAB15364"/>
    <property type="gene ID" value="BSU_33590"/>
</dbReference>
<dbReference type="GeneID" id="936172"/>
<dbReference type="KEGG" id="bsu:BSU33590"/>
<dbReference type="PATRIC" id="fig|224308.179.peg.3644"/>
<dbReference type="eggNOG" id="COG1028">
    <property type="taxonomic scope" value="Bacteria"/>
</dbReference>
<dbReference type="InParanoid" id="O32229"/>
<dbReference type="OrthoDB" id="9804774at2"/>
<dbReference type="PhylomeDB" id="O32229"/>
<dbReference type="BioCyc" id="BSUB:BSU33590-MONOMER"/>
<dbReference type="Proteomes" id="UP000001570">
    <property type="component" value="Chromosome"/>
</dbReference>
<dbReference type="GO" id="GO:0016491">
    <property type="term" value="F:oxidoreductase activity"/>
    <property type="evidence" value="ECO:0007669"/>
    <property type="project" value="UniProtKB-KW"/>
</dbReference>
<dbReference type="CDD" id="cd05233">
    <property type="entry name" value="SDR_c"/>
    <property type="match status" value="1"/>
</dbReference>
<dbReference type="FunFam" id="3.40.50.720:FF:000084">
    <property type="entry name" value="Short-chain dehydrogenase reductase"/>
    <property type="match status" value="1"/>
</dbReference>
<dbReference type="Gene3D" id="3.40.50.720">
    <property type="entry name" value="NAD(P)-binding Rossmann-like Domain"/>
    <property type="match status" value="1"/>
</dbReference>
<dbReference type="InterPro" id="IPR036291">
    <property type="entry name" value="NAD(P)-bd_dom_sf"/>
</dbReference>
<dbReference type="InterPro" id="IPR050259">
    <property type="entry name" value="SDR"/>
</dbReference>
<dbReference type="InterPro" id="IPR002347">
    <property type="entry name" value="SDR_fam"/>
</dbReference>
<dbReference type="PANTHER" id="PTHR42879">
    <property type="entry name" value="3-OXOACYL-(ACYL-CARRIER-PROTEIN) REDUCTASE"/>
    <property type="match status" value="1"/>
</dbReference>
<dbReference type="Pfam" id="PF00106">
    <property type="entry name" value="adh_short"/>
    <property type="match status" value="1"/>
</dbReference>
<dbReference type="PRINTS" id="PR00081">
    <property type="entry name" value="GDHRDH"/>
</dbReference>
<dbReference type="PRINTS" id="PR00080">
    <property type="entry name" value="SDRFAMILY"/>
</dbReference>
<dbReference type="SUPFAM" id="SSF51735">
    <property type="entry name" value="NAD(P)-binding Rossmann-fold domains"/>
    <property type="match status" value="1"/>
</dbReference>
<proteinExistence type="inferred from homology"/>
<comment type="similarity">
    <text evidence="2">Belongs to the short-chain dehydrogenases/reductases (SDR) family.</text>
</comment>
<sequence length="264" mass="29009">MKLNLQGKTALVTGSTSGIGKAIASSLAEEGAAVIINGRREEKVNQTIDELKTQHAEAVLYPAAFDLGTEEGCNELFQAYPEVDILVNNLGIFEPAEYFDIPDDEWFRFFEVNIMSGVRLTRRYLHNMIEKKEGRVIFIASEAAIMPSQEMAHYSATKTMQLSISRSLAELATGTNVTVNTVMPGSTLTEGVETMLNSLYPGENLTVQEAEARFMKENRPTSIIQRLIRPEEIAHFVTFLSSPLSSAINGAALRADGGLVRSVF</sequence>
<reference key="1">
    <citation type="journal article" date="1997" name="Nature">
        <title>The complete genome sequence of the Gram-positive bacterium Bacillus subtilis.</title>
        <authorList>
            <person name="Kunst F."/>
            <person name="Ogasawara N."/>
            <person name="Moszer I."/>
            <person name="Albertini A.M."/>
            <person name="Alloni G."/>
            <person name="Azevedo V."/>
            <person name="Bertero M.G."/>
            <person name="Bessieres P."/>
            <person name="Bolotin A."/>
            <person name="Borchert S."/>
            <person name="Borriss R."/>
            <person name="Boursier L."/>
            <person name="Brans A."/>
            <person name="Braun M."/>
            <person name="Brignell S.C."/>
            <person name="Bron S."/>
            <person name="Brouillet S."/>
            <person name="Bruschi C.V."/>
            <person name="Caldwell B."/>
            <person name="Capuano V."/>
            <person name="Carter N.M."/>
            <person name="Choi S.-K."/>
            <person name="Codani J.-J."/>
            <person name="Connerton I.F."/>
            <person name="Cummings N.J."/>
            <person name="Daniel R.A."/>
            <person name="Denizot F."/>
            <person name="Devine K.M."/>
            <person name="Duesterhoeft A."/>
            <person name="Ehrlich S.D."/>
            <person name="Emmerson P.T."/>
            <person name="Entian K.-D."/>
            <person name="Errington J."/>
            <person name="Fabret C."/>
            <person name="Ferrari E."/>
            <person name="Foulger D."/>
            <person name="Fritz C."/>
            <person name="Fujita M."/>
            <person name="Fujita Y."/>
            <person name="Fuma S."/>
            <person name="Galizzi A."/>
            <person name="Galleron N."/>
            <person name="Ghim S.-Y."/>
            <person name="Glaser P."/>
            <person name="Goffeau A."/>
            <person name="Golightly E.J."/>
            <person name="Grandi G."/>
            <person name="Guiseppi G."/>
            <person name="Guy B.J."/>
            <person name="Haga K."/>
            <person name="Haiech J."/>
            <person name="Harwood C.R."/>
            <person name="Henaut A."/>
            <person name="Hilbert H."/>
            <person name="Holsappel S."/>
            <person name="Hosono S."/>
            <person name="Hullo M.-F."/>
            <person name="Itaya M."/>
            <person name="Jones L.-M."/>
            <person name="Joris B."/>
            <person name="Karamata D."/>
            <person name="Kasahara Y."/>
            <person name="Klaerr-Blanchard M."/>
            <person name="Klein C."/>
            <person name="Kobayashi Y."/>
            <person name="Koetter P."/>
            <person name="Koningstein G."/>
            <person name="Krogh S."/>
            <person name="Kumano M."/>
            <person name="Kurita K."/>
            <person name="Lapidus A."/>
            <person name="Lardinois S."/>
            <person name="Lauber J."/>
            <person name="Lazarevic V."/>
            <person name="Lee S.-M."/>
            <person name="Levine A."/>
            <person name="Liu H."/>
            <person name="Masuda S."/>
            <person name="Mauel C."/>
            <person name="Medigue C."/>
            <person name="Medina N."/>
            <person name="Mellado R.P."/>
            <person name="Mizuno M."/>
            <person name="Moestl D."/>
            <person name="Nakai S."/>
            <person name="Noback M."/>
            <person name="Noone D."/>
            <person name="O'Reilly M."/>
            <person name="Ogawa K."/>
            <person name="Ogiwara A."/>
            <person name="Oudega B."/>
            <person name="Park S.-H."/>
            <person name="Parro V."/>
            <person name="Pohl T.M."/>
            <person name="Portetelle D."/>
            <person name="Porwollik S."/>
            <person name="Prescott A.M."/>
            <person name="Presecan E."/>
            <person name="Pujic P."/>
            <person name="Purnelle B."/>
            <person name="Rapoport G."/>
            <person name="Rey M."/>
            <person name="Reynolds S."/>
            <person name="Rieger M."/>
            <person name="Rivolta C."/>
            <person name="Rocha E."/>
            <person name="Roche B."/>
            <person name="Rose M."/>
            <person name="Sadaie Y."/>
            <person name="Sato T."/>
            <person name="Scanlan E."/>
            <person name="Schleich S."/>
            <person name="Schroeter R."/>
            <person name="Scoffone F."/>
            <person name="Sekiguchi J."/>
            <person name="Sekowska A."/>
            <person name="Seror S.J."/>
            <person name="Serror P."/>
            <person name="Shin B.-S."/>
            <person name="Soldo B."/>
            <person name="Sorokin A."/>
            <person name="Tacconi E."/>
            <person name="Takagi T."/>
            <person name="Takahashi H."/>
            <person name="Takemaru K."/>
            <person name="Takeuchi M."/>
            <person name="Tamakoshi A."/>
            <person name="Tanaka T."/>
            <person name="Terpstra P."/>
            <person name="Tognoni A."/>
            <person name="Tosato V."/>
            <person name="Uchiyama S."/>
            <person name="Vandenbol M."/>
            <person name="Vannier F."/>
            <person name="Vassarotti A."/>
            <person name="Viari A."/>
            <person name="Wambutt R."/>
            <person name="Wedler E."/>
            <person name="Wedler H."/>
            <person name="Weitzenegger T."/>
            <person name="Winters P."/>
            <person name="Wipat A."/>
            <person name="Yamamoto H."/>
            <person name="Yamane K."/>
            <person name="Yasumoto K."/>
            <person name="Yata K."/>
            <person name="Yoshida K."/>
            <person name="Yoshikawa H.-F."/>
            <person name="Zumstein E."/>
            <person name="Yoshikawa H."/>
            <person name="Danchin A."/>
        </authorList>
    </citation>
    <scope>NUCLEOTIDE SEQUENCE [LARGE SCALE GENOMIC DNA]</scope>
    <source>
        <strain>168</strain>
    </source>
</reference>
<name>YVAG_BACSU</name>
<organism>
    <name type="scientific">Bacillus subtilis (strain 168)</name>
    <dbReference type="NCBI Taxonomy" id="224308"/>
    <lineage>
        <taxon>Bacteria</taxon>
        <taxon>Bacillati</taxon>
        <taxon>Bacillota</taxon>
        <taxon>Bacilli</taxon>
        <taxon>Bacillales</taxon>
        <taxon>Bacillaceae</taxon>
        <taxon>Bacillus</taxon>
    </lineage>
</organism>
<gene>
    <name type="primary">yvaG</name>
    <name type="ordered locus">BSU33590</name>
</gene>
<keyword id="KW-0560">Oxidoreductase</keyword>
<keyword id="KW-1185">Reference proteome</keyword>